<gene>
    <name evidence="1" type="primary">torD</name>
    <name type="ordered locus">SBO_2233</name>
</gene>
<keyword id="KW-0143">Chaperone</keyword>
<keyword id="KW-0963">Cytoplasm</keyword>
<proteinExistence type="inferred from homology"/>
<name>TORD_SHIBS</name>
<accession>Q31YQ9</accession>
<sequence>MTTLTAQQIACVYAWLAQLFSRELDDEQLTQIASAQMAEWFSLLKSEPPLAAAVNELENCIATLTVRDDARLELAADFCGLFLMTDKQAALPYASAYKQDEQEIKRLLVEAGMETSGNFNEPADHLAIYLELLSHLHFSLGEGTVPARRIDSLRQKTLTALWQWLPEFAARCHQYDSFGFYAALSQLLLVLVECDHQNK</sequence>
<dbReference type="EMBL" id="CP000036">
    <property type="protein sequence ID" value="ABB66799.1"/>
    <property type="molecule type" value="Genomic_DNA"/>
</dbReference>
<dbReference type="RefSeq" id="WP_000209865.1">
    <property type="nucleotide sequence ID" value="NC_007613.1"/>
</dbReference>
<dbReference type="SMR" id="Q31YQ9"/>
<dbReference type="KEGG" id="sbo:SBO_2233"/>
<dbReference type="HOGENOM" id="CLU_077650_4_0_6"/>
<dbReference type="Proteomes" id="UP000007067">
    <property type="component" value="Chromosome"/>
</dbReference>
<dbReference type="GO" id="GO:0005737">
    <property type="term" value="C:cytoplasm"/>
    <property type="evidence" value="ECO:0007669"/>
    <property type="project" value="UniProtKB-SubCell"/>
</dbReference>
<dbReference type="GO" id="GO:0051259">
    <property type="term" value="P:protein complex oligomerization"/>
    <property type="evidence" value="ECO:0007669"/>
    <property type="project" value="InterPro"/>
</dbReference>
<dbReference type="GO" id="GO:0006457">
    <property type="term" value="P:protein folding"/>
    <property type="evidence" value="ECO:0007669"/>
    <property type="project" value="UniProtKB-UniRule"/>
</dbReference>
<dbReference type="FunFam" id="1.20.120.1820:FF:000001">
    <property type="entry name" value="Chaperone protein TorD"/>
    <property type="match status" value="1"/>
</dbReference>
<dbReference type="FunFam" id="1.20.1280.20:FF:000003">
    <property type="entry name" value="Chaperone protein TorD"/>
    <property type="match status" value="1"/>
</dbReference>
<dbReference type="Gene3D" id="1.20.120.1820">
    <property type="match status" value="1"/>
</dbReference>
<dbReference type="Gene3D" id="1.20.1280.20">
    <property type="entry name" value="HscB, C-terminal domain"/>
    <property type="match status" value="1"/>
</dbReference>
<dbReference type="HAMAP" id="MF_01150">
    <property type="entry name" value="TorD"/>
    <property type="match status" value="1"/>
</dbReference>
<dbReference type="InterPro" id="IPR023069">
    <property type="entry name" value="Chaperone_TorD"/>
</dbReference>
<dbReference type="InterPro" id="IPR020945">
    <property type="entry name" value="DMSO/NO3_reduct_chaperone"/>
</dbReference>
<dbReference type="InterPro" id="IPR036386">
    <property type="entry name" value="HscB_C_sf"/>
</dbReference>
<dbReference type="InterPro" id="IPR036411">
    <property type="entry name" value="TorD-like_sf"/>
</dbReference>
<dbReference type="InterPro" id="IPR050289">
    <property type="entry name" value="TorD/DmsD_chaperones"/>
</dbReference>
<dbReference type="NCBIfam" id="NF003442">
    <property type="entry name" value="PRK04976.1"/>
    <property type="match status" value="1"/>
</dbReference>
<dbReference type="PANTHER" id="PTHR34227:SF11">
    <property type="entry name" value="CHAPERONE PROTEIN TORD"/>
    <property type="match status" value="1"/>
</dbReference>
<dbReference type="PANTHER" id="PTHR34227">
    <property type="entry name" value="CHAPERONE PROTEIN YCDY"/>
    <property type="match status" value="1"/>
</dbReference>
<dbReference type="Pfam" id="PF02613">
    <property type="entry name" value="Nitrate_red_del"/>
    <property type="match status" value="1"/>
</dbReference>
<dbReference type="SUPFAM" id="SSF89155">
    <property type="entry name" value="TorD-like"/>
    <property type="match status" value="1"/>
</dbReference>
<comment type="function">
    <text evidence="1">Involved in the biogenesis of TorA. Acts on TorA before the insertion of the molybdenum cofactor and, as a result, probably favors a conformation of the apoenzyme that is competent for acquiring the cofactor.</text>
</comment>
<comment type="subcellular location">
    <subcellularLocation>
        <location evidence="1">Cytoplasm</location>
    </subcellularLocation>
</comment>
<comment type="similarity">
    <text evidence="1">Belongs to the TorD/DmsD family. TorD subfamily.</text>
</comment>
<reference key="1">
    <citation type="journal article" date="2005" name="Nucleic Acids Res.">
        <title>Genome dynamics and diversity of Shigella species, the etiologic agents of bacillary dysentery.</title>
        <authorList>
            <person name="Yang F."/>
            <person name="Yang J."/>
            <person name="Zhang X."/>
            <person name="Chen L."/>
            <person name="Jiang Y."/>
            <person name="Yan Y."/>
            <person name="Tang X."/>
            <person name="Wang J."/>
            <person name="Xiong Z."/>
            <person name="Dong J."/>
            <person name="Xue Y."/>
            <person name="Zhu Y."/>
            <person name="Xu X."/>
            <person name="Sun L."/>
            <person name="Chen S."/>
            <person name="Nie H."/>
            <person name="Peng J."/>
            <person name="Xu J."/>
            <person name="Wang Y."/>
            <person name="Yuan Z."/>
            <person name="Wen Y."/>
            <person name="Yao Z."/>
            <person name="Shen Y."/>
            <person name="Qiang B."/>
            <person name="Hou Y."/>
            <person name="Yu J."/>
            <person name="Jin Q."/>
        </authorList>
    </citation>
    <scope>NUCLEOTIDE SEQUENCE [LARGE SCALE GENOMIC DNA]</scope>
    <source>
        <strain>Sb227</strain>
    </source>
</reference>
<feature type="chain" id="PRO_1000065509" description="Chaperone protein TorD">
    <location>
        <begin position="1"/>
        <end position="199"/>
    </location>
</feature>
<evidence type="ECO:0000255" key="1">
    <source>
        <dbReference type="HAMAP-Rule" id="MF_01150"/>
    </source>
</evidence>
<organism>
    <name type="scientific">Shigella boydii serotype 4 (strain Sb227)</name>
    <dbReference type="NCBI Taxonomy" id="300268"/>
    <lineage>
        <taxon>Bacteria</taxon>
        <taxon>Pseudomonadati</taxon>
        <taxon>Pseudomonadota</taxon>
        <taxon>Gammaproteobacteria</taxon>
        <taxon>Enterobacterales</taxon>
        <taxon>Enterobacteriaceae</taxon>
        <taxon>Shigella</taxon>
    </lineage>
</organism>
<protein>
    <recommendedName>
        <fullName evidence="1">Chaperone protein TorD</fullName>
    </recommendedName>
</protein>